<geneLocation type="chloroplast"/>
<accession>P21510</accession>
<dbReference type="EMBL" id="Z11874">
    <property type="protein sequence ID" value="CAA77924.1"/>
    <property type="molecule type" value="Genomic_DNA"/>
</dbReference>
<dbReference type="EMBL" id="X70810">
    <property type="protein sequence ID" value="CAA50107.1"/>
    <property type="molecule type" value="Genomic_DNA"/>
</dbReference>
<dbReference type="PIR" id="S09288">
    <property type="entry name" value="R5EG5"/>
</dbReference>
<dbReference type="RefSeq" id="NP_041920.1">
    <property type="nucleotide sequence ID" value="NC_001603.2"/>
</dbReference>
<dbReference type="SMR" id="P21510"/>
<dbReference type="GeneID" id="807519"/>
<dbReference type="GO" id="GO:0009507">
    <property type="term" value="C:chloroplast"/>
    <property type="evidence" value="ECO:0007669"/>
    <property type="project" value="UniProtKB-SubCell"/>
</dbReference>
<dbReference type="GO" id="GO:1990904">
    <property type="term" value="C:ribonucleoprotein complex"/>
    <property type="evidence" value="ECO:0007669"/>
    <property type="project" value="UniProtKB-KW"/>
</dbReference>
<dbReference type="GO" id="GO:0005840">
    <property type="term" value="C:ribosome"/>
    <property type="evidence" value="ECO:0007669"/>
    <property type="project" value="UniProtKB-KW"/>
</dbReference>
<dbReference type="GO" id="GO:0019843">
    <property type="term" value="F:rRNA binding"/>
    <property type="evidence" value="ECO:0007669"/>
    <property type="project" value="UniProtKB-UniRule"/>
</dbReference>
<dbReference type="GO" id="GO:0003735">
    <property type="term" value="F:structural constituent of ribosome"/>
    <property type="evidence" value="ECO:0007669"/>
    <property type="project" value="InterPro"/>
</dbReference>
<dbReference type="GO" id="GO:0006412">
    <property type="term" value="P:translation"/>
    <property type="evidence" value="ECO:0007669"/>
    <property type="project" value="UniProtKB-UniRule"/>
</dbReference>
<dbReference type="FunFam" id="3.30.1440.10:FF:000001">
    <property type="entry name" value="50S ribosomal protein L5"/>
    <property type="match status" value="1"/>
</dbReference>
<dbReference type="Gene3D" id="3.30.1440.10">
    <property type="match status" value="1"/>
</dbReference>
<dbReference type="HAMAP" id="MF_01333_B">
    <property type="entry name" value="Ribosomal_uL5_B"/>
    <property type="match status" value="1"/>
</dbReference>
<dbReference type="InterPro" id="IPR002132">
    <property type="entry name" value="Ribosomal_uL5"/>
</dbReference>
<dbReference type="InterPro" id="IPR020930">
    <property type="entry name" value="Ribosomal_uL5_bac-type"/>
</dbReference>
<dbReference type="InterPro" id="IPR031309">
    <property type="entry name" value="Ribosomal_uL5_C"/>
</dbReference>
<dbReference type="InterPro" id="IPR020929">
    <property type="entry name" value="Ribosomal_uL5_CS"/>
</dbReference>
<dbReference type="InterPro" id="IPR022803">
    <property type="entry name" value="Ribosomal_uL5_dom_sf"/>
</dbReference>
<dbReference type="InterPro" id="IPR031310">
    <property type="entry name" value="Ribosomal_uL5_N"/>
</dbReference>
<dbReference type="NCBIfam" id="NF000585">
    <property type="entry name" value="PRK00010.1"/>
    <property type="match status" value="1"/>
</dbReference>
<dbReference type="PANTHER" id="PTHR11994">
    <property type="entry name" value="60S RIBOSOMAL PROTEIN L11-RELATED"/>
    <property type="match status" value="1"/>
</dbReference>
<dbReference type="Pfam" id="PF00281">
    <property type="entry name" value="Ribosomal_L5"/>
    <property type="match status" value="1"/>
</dbReference>
<dbReference type="Pfam" id="PF00673">
    <property type="entry name" value="Ribosomal_L5_C"/>
    <property type="match status" value="1"/>
</dbReference>
<dbReference type="PIRSF" id="PIRSF002161">
    <property type="entry name" value="Ribosomal_L5"/>
    <property type="match status" value="1"/>
</dbReference>
<dbReference type="SUPFAM" id="SSF55282">
    <property type="entry name" value="RL5-like"/>
    <property type="match status" value="1"/>
</dbReference>
<dbReference type="PROSITE" id="PS00358">
    <property type="entry name" value="RIBOSOMAL_L5"/>
    <property type="match status" value="1"/>
</dbReference>
<evidence type="ECO:0000250" key="1"/>
<evidence type="ECO:0000305" key="2"/>
<comment type="function">
    <text evidence="1">Binds 5S rRNA, forms part of the central protuberance of the 50S subunit.</text>
</comment>
<comment type="subunit">
    <text evidence="1">Part of the 50S ribosomal subunit; contacts the 5S rRNA.</text>
</comment>
<comment type="subcellular location">
    <subcellularLocation>
        <location>Plastid</location>
        <location>Chloroplast</location>
    </subcellularLocation>
</comment>
<comment type="similarity">
    <text evidence="2">Belongs to the universal ribosomal protein uL5 family.</text>
</comment>
<feature type="chain" id="PRO_0000125041" description="Large ribosomal subunit protein uL5c">
    <location>
        <begin position="1"/>
        <end position="179"/>
    </location>
</feature>
<gene>
    <name type="primary">rpl5</name>
</gene>
<name>RK5_EUGGR</name>
<sequence length="179" mass="20659">MQRLKSFYLETIIPKLKEEFGYVNSYRVPKLKKIVINRGFDESCQNSKILEVLLNELEIISGQKPIISKAKKAIANFKLKEKMPVGMFLTLRSEKMYSFLDRLINLSLPRIRDFQGINKNCFDGSGNFSFGLSEQSMFPEINFDKMIKVQGLNITIVTTAETNQEAFFLLKELGIPFRD</sequence>
<proteinExistence type="inferred from homology"/>
<reference key="1">
    <citation type="journal article" date="1989" name="Nucleic Acids Res.">
        <title>Euglena gracilis chloroplast ribosomal protein operon: a new chloroplast gene for ribosomal protein L5 and description of a novel organelle intron category designated group III.</title>
        <authorList>
            <person name="Christopher D.A."/>
            <person name="Hallick R.B."/>
        </authorList>
    </citation>
    <scope>NUCLEOTIDE SEQUENCE [GENOMIC DNA]</scope>
    <source>
        <strain>Z / UTEX 753</strain>
    </source>
</reference>
<reference key="2">
    <citation type="journal article" date="1993" name="Nucleic Acids Res.">
        <title>Complete sequence of Euglena gracilis chloroplast DNA.</title>
        <authorList>
            <person name="Hallick R.B."/>
            <person name="Hong L."/>
            <person name="Drager R.G."/>
            <person name="Favreau M.R."/>
            <person name="Monfort A."/>
            <person name="Orsat B."/>
            <person name="Spielmann A."/>
            <person name="Stutz E."/>
        </authorList>
    </citation>
    <scope>NUCLEOTIDE SEQUENCE [LARGE SCALE GENOMIC DNA]</scope>
    <source>
        <strain>Z / UTEX 753</strain>
    </source>
</reference>
<keyword id="KW-0150">Chloroplast</keyword>
<keyword id="KW-0934">Plastid</keyword>
<keyword id="KW-0687">Ribonucleoprotein</keyword>
<keyword id="KW-0689">Ribosomal protein</keyword>
<keyword id="KW-0694">RNA-binding</keyword>
<keyword id="KW-0699">rRNA-binding</keyword>
<organism>
    <name type="scientific">Euglena gracilis</name>
    <dbReference type="NCBI Taxonomy" id="3039"/>
    <lineage>
        <taxon>Eukaryota</taxon>
        <taxon>Discoba</taxon>
        <taxon>Euglenozoa</taxon>
        <taxon>Euglenida</taxon>
        <taxon>Spirocuta</taxon>
        <taxon>Euglenophyceae</taxon>
        <taxon>Euglenales</taxon>
        <taxon>Euglenaceae</taxon>
        <taxon>Euglena</taxon>
    </lineage>
</organism>
<protein>
    <recommendedName>
        <fullName evidence="2">Large ribosomal subunit protein uL5c</fullName>
    </recommendedName>
    <alternativeName>
        <fullName>50S ribosomal protein L5, chloroplastic</fullName>
    </alternativeName>
</protein>